<sequence length="89" mass="9693">MLKQSIEIINKLGLHARASNKFTQTASQFKSEVWVTKNDSRVNGKSIMGLMMLAAAKGTVIELETDGADEAEAMRALTDLINGYFGEGE</sequence>
<accession>P65877</accession>
<accession>Q9JQN1</accession>
<name>PTHP_NEIMB</name>
<comment type="function">
    <text evidence="1">General (non sugar-specific) component of the phosphoenolpyruvate-dependent sugar phosphotransferase system (sugar PTS). This major carbohydrate active-transport system catalyzes the phosphorylation of incoming sugar substrates concomitantly with their translocation across the cell membrane. The phosphoryl group from phosphoenolpyruvate (PEP) is transferred to the phosphoryl carrier protein HPr by enzyme I. Phospho-HPr then transfers it to the PTS EIIA domain.</text>
</comment>
<comment type="activity regulation">
    <text evidence="1">Phosphorylation on Ser-46 inhibits the phosphoryl transfer from enzyme I to HPr.</text>
</comment>
<comment type="subcellular location">
    <subcellularLocation>
        <location evidence="1">Cytoplasm</location>
    </subcellularLocation>
</comment>
<comment type="similarity">
    <text evidence="3">Belongs to the HPr family.</text>
</comment>
<protein>
    <recommendedName>
        <fullName>Phosphocarrier protein HPr</fullName>
    </recommendedName>
    <alternativeName>
        <fullName>Histidine-containing protein</fullName>
    </alternativeName>
</protein>
<keyword id="KW-0963">Cytoplasm</keyword>
<keyword id="KW-0597">Phosphoprotein</keyword>
<keyword id="KW-0598">Phosphotransferase system</keyword>
<keyword id="KW-1185">Reference proteome</keyword>
<keyword id="KW-0762">Sugar transport</keyword>
<keyword id="KW-0813">Transport</keyword>
<organism>
    <name type="scientific">Neisseria meningitidis serogroup B (strain ATCC BAA-335 / MC58)</name>
    <dbReference type="NCBI Taxonomy" id="122586"/>
    <lineage>
        <taxon>Bacteria</taxon>
        <taxon>Pseudomonadati</taxon>
        <taxon>Pseudomonadota</taxon>
        <taxon>Betaproteobacteria</taxon>
        <taxon>Neisseriales</taxon>
        <taxon>Neisseriaceae</taxon>
        <taxon>Neisseria</taxon>
    </lineage>
</organism>
<gene>
    <name type="primary">ptsH</name>
    <name type="ordered locus">NMB2045</name>
</gene>
<dbReference type="EMBL" id="AE002098">
    <property type="protein sequence ID" value="AAF42365.1"/>
    <property type="molecule type" value="Genomic_DNA"/>
</dbReference>
<dbReference type="PIR" id="A81013">
    <property type="entry name" value="A81013"/>
</dbReference>
<dbReference type="RefSeq" id="NP_275035.1">
    <property type="nucleotide sequence ID" value="NC_003112.2"/>
</dbReference>
<dbReference type="RefSeq" id="WP_002218178.1">
    <property type="nucleotide sequence ID" value="NC_003112.2"/>
</dbReference>
<dbReference type="SMR" id="P65877"/>
<dbReference type="FunCoup" id="P65877">
    <property type="interactions" value="15"/>
</dbReference>
<dbReference type="STRING" id="122586.NMB2045"/>
<dbReference type="PaxDb" id="122586-NMB2045"/>
<dbReference type="KEGG" id="nme:NMB2045"/>
<dbReference type="PATRIC" id="fig|122586.8.peg.2622"/>
<dbReference type="HOGENOM" id="CLU_136230_1_1_4"/>
<dbReference type="InParanoid" id="P65877"/>
<dbReference type="OrthoDB" id="9798965at2"/>
<dbReference type="Proteomes" id="UP000000425">
    <property type="component" value="Chromosome"/>
</dbReference>
<dbReference type="GO" id="GO:0005737">
    <property type="term" value="C:cytoplasm"/>
    <property type="evidence" value="ECO:0007669"/>
    <property type="project" value="UniProtKB-SubCell"/>
</dbReference>
<dbReference type="GO" id="GO:0009401">
    <property type="term" value="P:phosphoenolpyruvate-dependent sugar phosphotransferase system"/>
    <property type="evidence" value="ECO:0000318"/>
    <property type="project" value="GO_Central"/>
</dbReference>
<dbReference type="CDD" id="cd00367">
    <property type="entry name" value="PTS-HPr_like"/>
    <property type="match status" value="1"/>
</dbReference>
<dbReference type="Gene3D" id="3.30.1340.10">
    <property type="entry name" value="HPr-like"/>
    <property type="match status" value="1"/>
</dbReference>
<dbReference type="InterPro" id="IPR050399">
    <property type="entry name" value="HPr"/>
</dbReference>
<dbReference type="InterPro" id="IPR000032">
    <property type="entry name" value="HPr-like"/>
</dbReference>
<dbReference type="InterPro" id="IPR035895">
    <property type="entry name" value="HPr-like_sf"/>
</dbReference>
<dbReference type="InterPro" id="IPR001020">
    <property type="entry name" value="PTS_HPr_His_P_site"/>
</dbReference>
<dbReference type="InterPro" id="IPR002114">
    <property type="entry name" value="PTS_HPr_Ser_P_site"/>
</dbReference>
<dbReference type="NCBIfam" id="TIGR01003">
    <property type="entry name" value="PTS_HPr_family"/>
    <property type="match status" value="1"/>
</dbReference>
<dbReference type="PANTHER" id="PTHR33705">
    <property type="entry name" value="PHOSPHOCARRIER PROTEIN HPR"/>
    <property type="match status" value="1"/>
</dbReference>
<dbReference type="PANTHER" id="PTHR33705:SF2">
    <property type="entry name" value="PHOSPHOCARRIER PROTEIN NPR"/>
    <property type="match status" value="1"/>
</dbReference>
<dbReference type="Pfam" id="PF00381">
    <property type="entry name" value="PTS-HPr"/>
    <property type="match status" value="1"/>
</dbReference>
<dbReference type="PRINTS" id="PR00107">
    <property type="entry name" value="PHOSPHOCPHPR"/>
</dbReference>
<dbReference type="SUPFAM" id="SSF55594">
    <property type="entry name" value="HPr-like"/>
    <property type="match status" value="1"/>
</dbReference>
<dbReference type="PROSITE" id="PS51350">
    <property type="entry name" value="PTS_HPR_DOM"/>
    <property type="match status" value="1"/>
</dbReference>
<dbReference type="PROSITE" id="PS00369">
    <property type="entry name" value="PTS_HPR_HIS"/>
    <property type="match status" value="1"/>
</dbReference>
<dbReference type="PROSITE" id="PS00589">
    <property type="entry name" value="PTS_HPR_SER"/>
    <property type="match status" value="1"/>
</dbReference>
<reference key="1">
    <citation type="journal article" date="2000" name="Science">
        <title>Complete genome sequence of Neisseria meningitidis serogroup B strain MC58.</title>
        <authorList>
            <person name="Tettelin H."/>
            <person name="Saunders N.J."/>
            <person name="Heidelberg J.F."/>
            <person name="Jeffries A.C."/>
            <person name="Nelson K.E."/>
            <person name="Eisen J.A."/>
            <person name="Ketchum K.A."/>
            <person name="Hood D.W."/>
            <person name="Peden J.F."/>
            <person name="Dodson R.J."/>
            <person name="Nelson W.C."/>
            <person name="Gwinn M.L."/>
            <person name="DeBoy R.T."/>
            <person name="Peterson J.D."/>
            <person name="Hickey E.K."/>
            <person name="Haft D.H."/>
            <person name="Salzberg S.L."/>
            <person name="White O."/>
            <person name="Fleischmann R.D."/>
            <person name="Dougherty B.A."/>
            <person name="Mason T.M."/>
            <person name="Ciecko A."/>
            <person name="Parksey D.S."/>
            <person name="Blair E."/>
            <person name="Cittone H."/>
            <person name="Clark E.B."/>
            <person name="Cotton M.D."/>
            <person name="Utterback T.R."/>
            <person name="Khouri H.M."/>
            <person name="Qin H."/>
            <person name="Vamathevan J.J."/>
            <person name="Gill J."/>
            <person name="Scarlato V."/>
            <person name="Masignani V."/>
            <person name="Pizza M."/>
            <person name="Grandi G."/>
            <person name="Sun L."/>
            <person name="Smith H.O."/>
            <person name="Fraser C.M."/>
            <person name="Moxon E.R."/>
            <person name="Rappuoli R."/>
            <person name="Venter J.C."/>
        </authorList>
    </citation>
    <scope>NUCLEOTIDE SEQUENCE [LARGE SCALE GENOMIC DNA]</scope>
    <source>
        <strain>ATCC BAA-335 / MC58</strain>
    </source>
</reference>
<evidence type="ECO:0000250" key="1"/>
<evidence type="ECO:0000255" key="2">
    <source>
        <dbReference type="PROSITE-ProRule" id="PRU00681"/>
    </source>
</evidence>
<evidence type="ECO:0000305" key="3"/>
<feature type="chain" id="PRO_0000107866" description="Phosphocarrier protein HPr">
    <location>
        <begin position="1"/>
        <end position="89"/>
    </location>
</feature>
<feature type="domain" description="HPr" evidence="2">
    <location>
        <begin position="1"/>
        <end position="88"/>
    </location>
</feature>
<feature type="active site" description="Pros-phosphohistidine intermediate" evidence="2">
    <location>
        <position position="15"/>
    </location>
</feature>
<feature type="modified residue" description="Phosphoserine; by HPrK/P" evidence="2">
    <location>
        <position position="46"/>
    </location>
</feature>
<proteinExistence type="inferred from homology"/>